<feature type="signal peptide" evidence="1">
    <location>
        <begin position="1"/>
        <end position="34"/>
    </location>
</feature>
<feature type="chain" id="PRO_0000034468" description="Lymphotoxin-alpha">
    <location>
        <begin position="35"/>
        <end position="205"/>
    </location>
</feature>
<feature type="domain" description="THD" evidence="3">
    <location>
        <begin position="63"/>
        <end position="205"/>
    </location>
</feature>
<feature type="glycosylation site" description="O-linked (GalNAc...) threonine" evidence="1">
    <location>
        <position position="41"/>
    </location>
</feature>
<feature type="glycosylation site" description="N-linked (GlcNAc...) asparagine" evidence="1">
    <location>
        <position position="96"/>
    </location>
</feature>
<keyword id="KW-0202">Cytokine</keyword>
<keyword id="KW-0325">Glycoprotein</keyword>
<keyword id="KW-0472">Membrane</keyword>
<keyword id="KW-1185">Reference proteome</keyword>
<keyword id="KW-0964">Secreted</keyword>
<keyword id="KW-0732">Signal</keyword>
<reference key="1">
    <citation type="journal article" date="2002" name="Immunol. Rev.">
        <title>Comparative genomic analysis of the MHC: the evolution of class I duplication blocks, diversity and complexity from shark to man.</title>
        <authorList>
            <person name="Kulski J.K."/>
            <person name="Shiina T."/>
            <person name="Anzai T."/>
            <person name="Kohara S."/>
            <person name="Inoko H."/>
        </authorList>
    </citation>
    <scope>NUCLEOTIDE SEQUENCE [GENOMIC DNA]</scope>
</reference>
<reference key="2">
    <citation type="journal article" date="2003" name="Proc. Natl. Acad. Sci. U.S.A.">
        <title>Comparative sequencing of human and chimpanzee MHC class I regions unveils insertions/deletions as the major path to genomic divergence.</title>
        <authorList>
            <person name="Anzai T."/>
            <person name="Shiina T."/>
            <person name="Kimura N."/>
            <person name="Yanagiya K."/>
            <person name="Kohara S."/>
            <person name="Shigenari A."/>
            <person name="Yamagata T."/>
            <person name="Kulski J.K."/>
            <person name="Naruse T.K."/>
            <person name="Fujimori Y."/>
            <person name="Fukuzumi Y."/>
            <person name="Yamazaki M."/>
            <person name="Tashiro H."/>
            <person name="Iwamoto C."/>
            <person name="Umehara Y."/>
            <person name="Imanishi T."/>
            <person name="Meyer A."/>
            <person name="Ikeo K."/>
            <person name="Gojobori T."/>
            <person name="Bahram S."/>
            <person name="Inoko H."/>
        </authorList>
    </citation>
    <scope>NUCLEOTIDE SEQUENCE [LARGE SCALE GENOMIC DNA]</scope>
</reference>
<reference key="3">
    <citation type="journal article" date="2006" name="Genetics">
        <title>Rapid evolution of major histocompatibility complex class I genes in primates generates new disease alleles in humans via hitchhiking diversity.</title>
        <authorList>
            <person name="Shiina T."/>
            <person name="Ota M."/>
            <person name="Shimizu S."/>
            <person name="Katsuyama Y."/>
            <person name="Hashimoto N."/>
            <person name="Takasu M."/>
            <person name="Anzai T."/>
            <person name="Kulski J.K."/>
            <person name="Kikkawa E."/>
            <person name="Naruse T."/>
            <person name="Kimura N."/>
            <person name="Yanagiya K."/>
            <person name="Watanabe A."/>
            <person name="Hosomichi K."/>
            <person name="Kohara S."/>
            <person name="Iwamoto C."/>
            <person name="Umehara Y."/>
            <person name="Meyer A."/>
            <person name="Wanner V."/>
            <person name="Sano K."/>
            <person name="Macquin C."/>
            <person name="Ikeo K."/>
            <person name="Tokunaga K."/>
            <person name="Gojobori T."/>
            <person name="Inoko H."/>
            <person name="Bahram S."/>
        </authorList>
    </citation>
    <scope>NUCLEOTIDE SEQUENCE [LARGE SCALE GENOMIC DNA]</scope>
</reference>
<name>TNFB_PANTR</name>
<gene>
    <name type="primary">LTA</name>
    <name type="synonym">TNFB</name>
    <name type="synonym">TNFSF1</name>
</gene>
<protein>
    <recommendedName>
        <fullName>Lymphotoxin-alpha</fullName>
        <shortName>LT-alpha</shortName>
    </recommendedName>
    <alternativeName>
        <fullName>TNF-beta</fullName>
    </alternativeName>
    <alternativeName>
        <fullName>Tumor necrosis factor ligand superfamily member 1</fullName>
    </alternativeName>
</protein>
<evidence type="ECO:0000250" key="1"/>
<evidence type="ECO:0000250" key="2">
    <source>
        <dbReference type="UniProtKB" id="P01374"/>
    </source>
</evidence>
<evidence type="ECO:0000255" key="3">
    <source>
        <dbReference type="PROSITE-ProRule" id="PRU01387"/>
    </source>
</evidence>
<evidence type="ECO:0000305" key="4"/>
<accession>P61125</accession>
<accession>Q1XHZ7</accession>
<dbReference type="EMBL" id="AB054536">
    <property type="protein sequence ID" value="BAB83883.1"/>
    <property type="molecule type" value="Genomic_DNA"/>
</dbReference>
<dbReference type="EMBL" id="BA000041">
    <property type="protein sequence ID" value="BAC78158.1"/>
    <property type="molecule type" value="Genomic_DNA"/>
</dbReference>
<dbReference type="EMBL" id="AB210165">
    <property type="protein sequence ID" value="BAE92771.1"/>
    <property type="molecule type" value="Genomic_DNA"/>
</dbReference>
<dbReference type="EMBL" id="AB210166">
    <property type="protein sequence ID" value="BAE92773.1"/>
    <property type="molecule type" value="Genomic_DNA"/>
</dbReference>
<dbReference type="RefSeq" id="NP_001038975.1">
    <property type="nucleotide sequence ID" value="NM_001045510.1"/>
</dbReference>
<dbReference type="RefSeq" id="XP_009449138.1">
    <property type="nucleotide sequence ID" value="XM_009450863.5"/>
</dbReference>
<dbReference type="RefSeq" id="XP_016810225.1">
    <property type="nucleotide sequence ID" value="XM_016954736.1"/>
</dbReference>
<dbReference type="RefSeq" id="XP_063668082.1">
    <property type="nucleotide sequence ID" value="XM_063812012.1"/>
</dbReference>
<dbReference type="SMR" id="P61125"/>
<dbReference type="FunCoup" id="P61125">
    <property type="interactions" value="740"/>
</dbReference>
<dbReference type="STRING" id="9598.ENSPTRP00000030651"/>
<dbReference type="GlyCosmos" id="P61125">
    <property type="glycosylation" value="2 sites, No reported glycans"/>
</dbReference>
<dbReference type="PaxDb" id="9598-ENSPTRP00000030651"/>
<dbReference type="Ensembl" id="ENSPTRT00000033173.3">
    <property type="protein sequence ID" value="ENSPTRP00000030651.2"/>
    <property type="gene ID" value="ENSPTRG00000017964.3"/>
</dbReference>
<dbReference type="GeneID" id="494185"/>
<dbReference type="KEGG" id="ptr:494185"/>
<dbReference type="CTD" id="4049"/>
<dbReference type="VGNC" id="VGNC:11106">
    <property type="gene designation" value="LTA"/>
</dbReference>
<dbReference type="eggNOG" id="ENOG502S4K8">
    <property type="taxonomic scope" value="Eukaryota"/>
</dbReference>
<dbReference type="GeneTree" id="ENSGT01060000248544"/>
<dbReference type="HOGENOM" id="CLU_070352_4_0_1"/>
<dbReference type="InParanoid" id="P61125"/>
<dbReference type="OMA" id="RSACQNV"/>
<dbReference type="OrthoDB" id="11170at9604"/>
<dbReference type="TreeFam" id="TF332169"/>
<dbReference type="Proteomes" id="UP000002277">
    <property type="component" value="Chromosome 6"/>
</dbReference>
<dbReference type="Bgee" id="ENSPTRG00000017964">
    <property type="expression patterns" value="Expressed in testis and 1 other cell type or tissue"/>
</dbReference>
<dbReference type="GO" id="GO:0005615">
    <property type="term" value="C:extracellular space"/>
    <property type="evidence" value="ECO:0000318"/>
    <property type="project" value="GO_Central"/>
</dbReference>
<dbReference type="GO" id="GO:0016020">
    <property type="term" value="C:membrane"/>
    <property type="evidence" value="ECO:0007669"/>
    <property type="project" value="UniProtKB-SubCell"/>
</dbReference>
<dbReference type="GO" id="GO:0005125">
    <property type="term" value="F:cytokine activity"/>
    <property type="evidence" value="ECO:0000318"/>
    <property type="project" value="GO_Central"/>
</dbReference>
<dbReference type="GO" id="GO:0005164">
    <property type="term" value="F:tumor necrosis factor receptor binding"/>
    <property type="evidence" value="ECO:0007669"/>
    <property type="project" value="InterPro"/>
</dbReference>
<dbReference type="GO" id="GO:0007166">
    <property type="term" value="P:cell surface receptor signaling pathway"/>
    <property type="evidence" value="ECO:0000318"/>
    <property type="project" value="GO_Central"/>
</dbReference>
<dbReference type="GO" id="GO:0050830">
    <property type="term" value="P:defense response to Gram-positive bacterium"/>
    <property type="evidence" value="ECO:0007669"/>
    <property type="project" value="Ensembl"/>
</dbReference>
<dbReference type="GO" id="GO:0006959">
    <property type="term" value="P:humoral immune response"/>
    <property type="evidence" value="ECO:0007669"/>
    <property type="project" value="Ensembl"/>
</dbReference>
<dbReference type="GO" id="GO:0006955">
    <property type="term" value="P:immune response"/>
    <property type="evidence" value="ECO:0000318"/>
    <property type="project" value="GO_Central"/>
</dbReference>
<dbReference type="GO" id="GO:0048535">
    <property type="term" value="P:lymph node development"/>
    <property type="evidence" value="ECO:0007669"/>
    <property type="project" value="Ensembl"/>
</dbReference>
<dbReference type="GO" id="GO:0043123">
    <property type="term" value="P:positive regulation of canonical NF-kappaB signal transduction"/>
    <property type="evidence" value="ECO:0000318"/>
    <property type="project" value="GO_Central"/>
</dbReference>
<dbReference type="GO" id="GO:0002876">
    <property type="term" value="P:positive regulation of chronic inflammatory response to antigenic stimulus"/>
    <property type="evidence" value="ECO:0007669"/>
    <property type="project" value="Ensembl"/>
</dbReference>
<dbReference type="GO" id="GO:2001238">
    <property type="term" value="P:positive regulation of extrinsic apoptotic signaling pathway"/>
    <property type="evidence" value="ECO:0000318"/>
    <property type="project" value="GO_Central"/>
</dbReference>
<dbReference type="GO" id="GO:0002925">
    <property type="term" value="P:positive regulation of humoral immune response mediated by circulating immunoglobulin"/>
    <property type="evidence" value="ECO:0007669"/>
    <property type="project" value="Ensembl"/>
</dbReference>
<dbReference type="GO" id="GO:0032729">
    <property type="term" value="P:positive regulation of type II interferon production"/>
    <property type="evidence" value="ECO:0007669"/>
    <property type="project" value="Ensembl"/>
</dbReference>
<dbReference type="CDD" id="cd00184">
    <property type="entry name" value="TNF"/>
    <property type="match status" value="1"/>
</dbReference>
<dbReference type="FunFam" id="2.60.120.40:FF:000016">
    <property type="entry name" value="Tumor necrosis factor"/>
    <property type="match status" value="1"/>
</dbReference>
<dbReference type="Gene3D" id="2.60.120.40">
    <property type="match status" value="1"/>
</dbReference>
<dbReference type="InterPro" id="IPR006053">
    <property type="entry name" value="TNF"/>
</dbReference>
<dbReference type="InterPro" id="IPR002960">
    <property type="entry name" value="TNF_beta"/>
</dbReference>
<dbReference type="InterPro" id="IPR021184">
    <property type="entry name" value="TNF_CS"/>
</dbReference>
<dbReference type="InterPro" id="IPR006052">
    <property type="entry name" value="TNF_dom"/>
</dbReference>
<dbReference type="InterPro" id="IPR008983">
    <property type="entry name" value="Tumour_necrosis_fac-like_dom"/>
</dbReference>
<dbReference type="PANTHER" id="PTHR11471:SF31">
    <property type="entry name" value="LYMPHOTOXIN-ALPHA"/>
    <property type="match status" value="1"/>
</dbReference>
<dbReference type="PANTHER" id="PTHR11471">
    <property type="entry name" value="TUMOR NECROSIS FACTOR FAMILY MEMBER"/>
    <property type="match status" value="1"/>
</dbReference>
<dbReference type="Pfam" id="PF00229">
    <property type="entry name" value="TNF"/>
    <property type="match status" value="1"/>
</dbReference>
<dbReference type="PRINTS" id="PR01234">
    <property type="entry name" value="TNECROSISFCT"/>
</dbReference>
<dbReference type="PRINTS" id="PR01236">
    <property type="entry name" value="TNFBETA"/>
</dbReference>
<dbReference type="SMART" id="SM00207">
    <property type="entry name" value="TNF"/>
    <property type="match status" value="1"/>
</dbReference>
<dbReference type="SUPFAM" id="SSF49842">
    <property type="entry name" value="TNF-like"/>
    <property type="match status" value="1"/>
</dbReference>
<dbReference type="PROSITE" id="PS00251">
    <property type="entry name" value="THD_1"/>
    <property type="match status" value="1"/>
</dbReference>
<dbReference type="PROSITE" id="PS50049">
    <property type="entry name" value="THD_2"/>
    <property type="match status" value="1"/>
</dbReference>
<organism>
    <name type="scientific">Pan troglodytes</name>
    <name type="common">Chimpanzee</name>
    <dbReference type="NCBI Taxonomy" id="9598"/>
    <lineage>
        <taxon>Eukaryota</taxon>
        <taxon>Metazoa</taxon>
        <taxon>Chordata</taxon>
        <taxon>Craniata</taxon>
        <taxon>Vertebrata</taxon>
        <taxon>Euteleostomi</taxon>
        <taxon>Mammalia</taxon>
        <taxon>Eutheria</taxon>
        <taxon>Euarchontoglires</taxon>
        <taxon>Primates</taxon>
        <taxon>Haplorrhini</taxon>
        <taxon>Catarrhini</taxon>
        <taxon>Hominidae</taxon>
        <taxon>Pan</taxon>
    </lineage>
</organism>
<comment type="function">
    <text evidence="1 2">Cytokine that in its homotrimeric form binds to TNFRSF1A/TNFR1, TNFRSF1B/TNFBR and TNFRSF14/HVEM (By similarity). In its heterotrimeric form with LTB binds to TNFRSF3/LTBR. Lymphotoxin is produced by lymphocytes and is cytotoxic for a wide range of tumor cells in vitro and in vivo (By similarity).</text>
</comment>
<comment type="subunit">
    <text evidence="2">Homotrimer, and heterotrimer of either two LTB and one LTA subunits or (less prevalent) two LTA and one LTB subunits. Interacts with TNFRSF14.</text>
</comment>
<comment type="subcellular location">
    <subcellularLocation>
        <location evidence="1">Secreted</location>
    </subcellularLocation>
    <subcellularLocation>
        <location evidence="1">Membrane</location>
    </subcellularLocation>
    <text evidence="1">The homotrimer is secreted. The heterotrimer is membrane-associated.</text>
</comment>
<comment type="similarity">
    <text evidence="4">Belongs to the tumor necrosis factor family.</text>
</comment>
<proteinExistence type="inferred from homology"/>
<sequence>MTPPERLFLPRVRGTTLHLLLLGLLLVLLPGAQGLPGVGLTPSAAQTARQHPKMHLAHSTLKPAAHLIGDPSKQNSLLWRANTDRAFLQDGFSLSNNSLLVPTSGIYFVYSQVVFSGKAYSPKATSSPLYLAHEVQLFSSQYPFHVPLLSSQKMVYPGLQEPWLHSMYHGAAFQLTQGDQLSTHTDGIPHLVLSPSTVFFGAFAL</sequence>